<accession>Q06211</accession>
<accession>D6W4G5</accession>
<reference key="1">
    <citation type="submission" date="1994-08" db="EMBL/GenBank/DDBJ databases">
        <authorList>
            <person name="Xiao W."/>
        </authorList>
    </citation>
    <scope>NUCLEOTIDE SEQUENCE [GENOMIC DNA]</scope>
    <source>
        <strain>S288c / GRF88</strain>
    </source>
</reference>
<reference key="2">
    <citation type="journal article" date="1997" name="Nature">
        <title>The nucleotide sequence of Saccharomyces cerevisiae chromosome XVI.</title>
        <authorList>
            <person name="Bussey H."/>
            <person name="Storms R.K."/>
            <person name="Ahmed A."/>
            <person name="Albermann K."/>
            <person name="Allen E."/>
            <person name="Ansorge W."/>
            <person name="Araujo R."/>
            <person name="Aparicio A."/>
            <person name="Barrell B.G."/>
            <person name="Badcock K."/>
            <person name="Benes V."/>
            <person name="Botstein D."/>
            <person name="Bowman S."/>
            <person name="Brueckner M."/>
            <person name="Carpenter J."/>
            <person name="Cherry J.M."/>
            <person name="Chung E."/>
            <person name="Churcher C.M."/>
            <person name="Coster F."/>
            <person name="Davis K."/>
            <person name="Davis R.W."/>
            <person name="Dietrich F.S."/>
            <person name="Delius H."/>
            <person name="DiPaolo T."/>
            <person name="Dubois E."/>
            <person name="Duesterhoeft A."/>
            <person name="Duncan M."/>
            <person name="Floeth M."/>
            <person name="Fortin N."/>
            <person name="Friesen J.D."/>
            <person name="Fritz C."/>
            <person name="Goffeau A."/>
            <person name="Hall J."/>
            <person name="Hebling U."/>
            <person name="Heumann K."/>
            <person name="Hilbert H."/>
            <person name="Hillier L.W."/>
            <person name="Hunicke-Smith S."/>
            <person name="Hyman R.W."/>
            <person name="Johnston M."/>
            <person name="Kalman S."/>
            <person name="Kleine K."/>
            <person name="Komp C."/>
            <person name="Kurdi O."/>
            <person name="Lashkari D."/>
            <person name="Lew H."/>
            <person name="Lin A."/>
            <person name="Lin D."/>
            <person name="Louis E.J."/>
            <person name="Marathe R."/>
            <person name="Messenguy F."/>
            <person name="Mewes H.-W."/>
            <person name="Mirtipati S."/>
            <person name="Moestl D."/>
            <person name="Mueller-Auer S."/>
            <person name="Namath A."/>
            <person name="Nentwich U."/>
            <person name="Oefner P."/>
            <person name="Pearson D."/>
            <person name="Petel F.X."/>
            <person name="Pohl T.M."/>
            <person name="Purnelle B."/>
            <person name="Rajandream M.A."/>
            <person name="Rechmann S."/>
            <person name="Rieger M."/>
            <person name="Riles L."/>
            <person name="Roberts D."/>
            <person name="Schaefer M."/>
            <person name="Scharfe M."/>
            <person name="Scherens B."/>
            <person name="Schramm S."/>
            <person name="Schroeder M."/>
            <person name="Sdicu A.-M."/>
            <person name="Tettelin H."/>
            <person name="Urrestarazu L.A."/>
            <person name="Ushinsky S."/>
            <person name="Vierendeels F."/>
            <person name="Vissers S."/>
            <person name="Voss H."/>
            <person name="Walsh S.V."/>
            <person name="Wambutt R."/>
            <person name="Wang Y."/>
            <person name="Wedler E."/>
            <person name="Wedler H."/>
            <person name="Winnett E."/>
            <person name="Zhong W.-W."/>
            <person name="Zollner A."/>
            <person name="Vo D.H."/>
            <person name="Hani J."/>
        </authorList>
    </citation>
    <scope>NUCLEOTIDE SEQUENCE [LARGE SCALE GENOMIC DNA]</scope>
    <source>
        <strain>ATCC 204508 / S288c</strain>
    </source>
</reference>
<reference key="3">
    <citation type="journal article" date="2014" name="G3 (Bethesda)">
        <title>The reference genome sequence of Saccharomyces cerevisiae: Then and now.</title>
        <authorList>
            <person name="Engel S.R."/>
            <person name="Dietrich F.S."/>
            <person name="Fisk D.G."/>
            <person name="Binkley G."/>
            <person name="Balakrishnan R."/>
            <person name="Costanzo M.C."/>
            <person name="Dwight S.S."/>
            <person name="Hitz B.C."/>
            <person name="Karra K."/>
            <person name="Nash R.S."/>
            <person name="Weng S."/>
            <person name="Wong E.D."/>
            <person name="Lloyd P."/>
            <person name="Skrzypek M.S."/>
            <person name="Miyasato S.R."/>
            <person name="Simison M."/>
            <person name="Cherry J.M."/>
        </authorList>
    </citation>
    <scope>GENOME REANNOTATION</scope>
    <source>
        <strain>ATCC 204508 / S288c</strain>
    </source>
</reference>
<reference key="4">
    <citation type="journal article" date="2001" name="Genetics">
        <title>Multiple regulators of Ty1 transposition in Saccharomyces cerevisiae have conserved roles in genome maintenance.</title>
        <authorList>
            <person name="Scholes D.T."/>
            <person name="Banerjee M."/>
            <person name="Bowen B."/>
            <person name="Curcio M.J."/>
        </authorList>
    </citation>
    <scope>FUNCTION</scope>
</reference>
<reference key="5">
    <citation type="journal article" date="2002" name="Mol. Genet. Genomics">
        <title>MMS1 protects against replication-dependent DNA damage in Saccharomyces cerevisiae.</title>
        <authorList>
            <person name="Hryciw T."/>
            <person name="Tang M."/>
            <person name="Fontanie T."/>
            <person name="Xiao W."/>
        </authorList>
    </citation>
    <scope>FUNCTION</scope>
</reference>
<reference key="6">
    <citation type="journal article" date="2002" name="Proc. Natl. Acad. Sci. U.S.A.">
        <title>A genome-wide screen for methyl methanesulfonate-sensitive mutants reveals genes required for S phase progression in the presence of DNA damage.</title>
        <authorList>
            <person name="Chang M."/>
            <person name="Bellaoui M."/>
            <person name="Boone C."/>
            <person name="Brown G.W."/>
        </authorList>
    </citation>
    <scope>FUNCTION</scope>
</reference>
<reference key="7">
    <citation type="journal article" date="2003" name="Genes Cells">
        <title>Budding yeast mcm10/dna43 mutant requires a novel repair pathway for viability.</title>
        <authorList>
            <person name="Araki Y."/>
            <person name="Kawasaki Y."/>
            <person name="Sasanuma H."/>
            <person name="Tye B.K."/>
            <person name="Sugino A."/>
        </authorList>
    </citation>
    <scope>FUNCTION</scope>
</reference>
<reference key="8">
    <citation type="journal article" date="2005" name="Mol. Cell. Biol.">
        <title>Disruption of mechanisms that prevent rereplication triggers a DNA damage response.</title>
        <authorList>
            <person name="Archambault V."/>
            <person name="Ikui A.E."/>
            <person name="Drapkin B.J."/>
            <person name="Cross F.R."/>
        </authorList>
    </citation>
    <scope>FUNCTION</scope>
</reference>
<reference key="9">
    <citation type="journal article" date="2005" name="PLoS Genet.">
        <title>Genome-wide requirements for resistance to functionally distinct DNA-damaging agents.</title>
        <authorList>
            <person name="Lee W."/>
            <person name="St Onge R.P."/>
            <person name="Proctor M."/>
            <person name="Flaherty P."/>
            <person name="Jordan M.I."/>
            <person name="Arkin A.P."/>
            <person name="Davis R.W."/>
            <person name="Nislow C."/>
            <person name="Giaever G."/>
        </authorList>
    </citation>
    <scope>FUNCTION</scope>
</reference>
<reference key="10">
    <citation type="journal article" date="2007" name="J. Proteome Res.">
        <title>Large-scale phosphorylation analysis of alpha-factor-arrested Saccharomyces cerevisiae.</title>
        <authorList>
            <person name="Li X."/>
            <person name="Gerber S.A."/>
            <person name="Rudner A.D."/>
            <person name="Beausoleil S.A."/>
            <person name="Haas W."/>
            <person name="Villen J."/>
            <person name="Elias J.E."/>
            <person name="Gygi S.P."/>
        </authorList>
    </citation>
    <scope>PHOSPHORYLATION [LARGE SCALE ANALYSIS] AT THR-1294</scope>
    <scope>IDENTIFICATION BY MASS SPECTROMETRY [LARGE SCALE ANALYSIS]</scope>
    <source>
        <strain>ADR376</strain>
    </source>
</reference>
<reference key="11">
    <citation type="journal article" date="2008" name="DNA Repair">
        <title>Budding yeast Mms22 and Mms1 regulate homologous recombination induced by replisome blockage.</title>
        <authorList>
            <person name="Duro E."/>
            <person name="Vaisica J.A."/>
            <person name="Brown G.W."/>
            <person name="Rouse J."/>
        </authorList>
    </citation>
    <scope>FUNCTION</scope>
</reference>
<reference key="12">
    <citation type="journal article" date="2008" name="EMBO Rep.">
        <title>Rtt101 and Mms1 in budding yeast form a CUL4(DDB1)-like ubiquitin ligase that promotes replication through damaged DNA.</title>
        <authorList>
            <person name="Zaidi I.W."/>
            <person name="Rabut G."/>
            <person name="Poveda A."/>
            <person name="Scheel H."/>
            <person name="Malmstrom J."/>
            <person name="Ulrich H."/>
            <person name="Hofmann K."/>
            <person name="Pasero P."/>
            <person name="Peter M."/>
            <person name="Luke B."/>
        </authorList>
    </citation>
    <scope>FUNCTION</scope>
    <scope>INTERACTION WITH RTT101; MMS22 AND CRT10</scope>
</reference>
<reference key="13">
    <citation type="journal article" date="2008" name="Mol. Cell. Proteomics">
        <title>A multidimensional chromatography technology for in-depth phosphoproteome analysis.</title>
        <authorList>
            <person name="Albuquerque C.P."/>
            <person name="Smolka M.B."/>
            <person name="Payne S.H."/>
            <person name="Bafna V."/>
            <person name="Eng J."/>
            <person name="Zhou H."/>
        </authorList>
    </citation>
    <scope>PHOSPHORYLATION [LARGE SCALE ANALYSIS] AT THR-1294</scope>
    <scope>IDENTIFICATION BY MASS SPECTROMETRY [LARGE SCALE ANALYSIS]</scope>
</reference>
<reference key="14">
    <citation type="journal article" date="2009" name="Genes Dev.">
        <title>A role for ubiquitin in the clearance of nonfunctional rRNAs.</title>
        <authorList>
            <person name="Fujii K."/>
            <person name="Kitabatake M."/>
            <person name="Sakata T."/>
            <person name="Miyata A."/>
            <person name="Ohno M."/>
        </authorList>
    </citation>
    <scope>FUNCTION</scope>
</reference>
<reference key="15">
    <citation type="journal article" date="2010" name="J. Biol. Chem.">
        <title>Cul8/Rtt101 forms a variety of protein complexes that regulate DNA damage response and transcriptional silencing.</title>
        <authorList>
            <person name="Mimura S."/>
            <person name="Yamaguchi T."/>
            <person name="Ishii S."/>
            <person name="Noro E."/>
            <person name="Katsura T."/>
            <person name="Obuse C."/>
            <person name="Kamura T."/>
        </authorList>
    </citation>
    <scope>INTERACTION WITH RTT101; MMS22; ESC2 AND ORC5</scope>
</reference>
<reference key="16">
    <citation type="journal article" date="2011" name="Mol. Biol. Cell">
        <title>Mms1 and Mms22 stabilize the replisome during replication stress.</title>
        <authorList>
            <person name="Vaisica J.A."/>
            <person name="Baryshnikova A."/>
            <person name="Costanzo M."/>
            <person name="Boone C."/>
            <person name="Brown G.W."/>
        </authorList>
    </citation>
    <scope>FUNCTION</scope>
    <scope>SUBCELLULAR LOCATION</scope>
</reference>
<reference key="17">
    <citation type="journal article" date="2013" name="Cell">
        <title>A Cul4 E3 ubiquitin ligase regulates histone hand-off during nucleosome assembly.</title>
        <authorList>
            <person name="Han J."/>
            <person name="Zhang H."/>
            <person name="Zhang H."/>
            <person name="Wang Z."/>
            <person name="Zhou H."/>
            <person name="Zhang Z."/>
        </authorList>
    </citation>
    <scope>FUNCTION IN UBIQUITINATION OF H3</scope>
</reference>
<keyword id="KW-0131">Cell cycle</keyword>
<keyword id="KW-0132">Cell division</keyword>
<keyword id="KW-0227">DNA damage</keyword>
<keyword id="KW-0234">DNA repair</keyword>
<keyword id="KW-0539">Nucleus</keyword>
<keyword id="KW-0597">Phosphoprotein</keyword>
<keyword id="KW-1185">Reference proteome</keyword>
<evidence type="ECO:0000269" key="1">
    <source>
    </source>
</evidence>
<evidence type="ECO:0000269" key="2">
    <source>
    </source>
</evidence>
<evidence type="ECO:0000269" key="3">
    <source>
    </source>
</evidence>
<evidence type="ECO:0000269" key="4">
    <source>
    </source>
</evidence>
<evidence type="ECO:0000269" key="5">
    <source>
    </source>
</evidence>
<evidence type="ECO:0000269" key="6">
    <source>
    </source>
</evidence>
<evidence type="ECO:0000269" key="7">
    <source>
    </source>
</evidence>
<evidence type="ECO:0000269" key="8">
    <source>
    </source>
</evidence>
<evidence type="ECO:0000269" key="9">
    <source>
    </source>
</evidence>
<evidence type="ECO:0000269" key="10">
    <source>
    </source>
</evidence>
<evidence type="ECO:0000269" key="11">
    <source>
    </source>
</evidence>
<evidence type="ECO:0000269" key="12">
    <source>
    </source>
</evidence>
<evidence type="ECO:0007744" key="13">
    <source>
    </source>
</evidence>
<evidence type="ECO:0007744" key="14">
    <source>
    </source>
</evidence>
<protein>
    <recommendedName>
        <fullName>E3 ubiquitin-protein ligase linker protein MMS1</fullName>
    </recommendedName>
    <alternativeName>
        <fullName>Methyl methanesulfonate-sensitivity protein 1</fullName>
    </alternativeName>
    <alternativeName>
        <fullName>Regulator of Ty1 transposition protein 108</fullName>
    </alternativeName>
    <alternativeName>
        <fullName>Synthetically lethal with MCM10 protein 6</fullName>
    </alternativeName>
</protein>
<feature type="chain" id="PRO_0000257820" description="E3 ubiquitin-protein ligase linker protein MMS1">
    <location>
        <begin position="1"/>
        <end position="1407"/>
    </location>
</feature>
<feature type="region of interest" description="Required for interaction with MMS22">
    <location>
        <begin position="1"/>
        <end position="600"/>
    </location>
</feature>
<feature type="modified residue" description="Phosphothreonine" evidence="13 14">
    <location>
        <position position="1294"/>
    </location>
</feature>
<gene>
    <name type="primary">MMS1</name>
    <name type="synonym">KIM3</name>
    <name type="synonym">RTT108</name>
    <name type="synonym">SLM6</name>
    <name type="ordered locus">YPR164W</name>
</gene>
<sequence length="1407" mass="161238">MLGLRTHGLDRYEHYIRRPSDFGKLELQDWLNHKSFRVSPNLLIDSSTTREWNEPELFYQNTEDETWVRPCVGPKLEPSMMMLRYHDSNIGQMPQFCYPISSPINFKPVLKYILQERSELSDGFPQKYNTLIGSLFDIDKNPETLDDSDIEALDDIEMSSDSGNVKEPKIELQALEEIQQKHFSLIVSNNGIFQTGSTSITYIQSGISGSIAIKPNNVAILILLTQPSGHLLSILPLDDGKETYLLQYWNLGQKGQWNIIKHQNEKQFVLIHKELGICKFFEFHLPFTFQLVNNLTLTDSVIMNGSFFPTNYTDLDPYFIIFITAIRYERIVYFVIEWNNNEIKKKEVYQLTVFDGEKTNMTIPIGLNACLVETPLKFSLVSANQIMSGETEFHSFQLKALKGIKSFFPAPLLLLKLQELHPHTFKKFQYCTIISSSTGNICFCVTERSTIVNGNLKFYELTRFKGLKSISPLPSNPINLDSRSSSYVLVVISFSRTLELTLSLEDLRCLDKKDVIKPLKNITFKHTIDSSTEENSQILAFTSSKFYNTHTGSNINDTRNSQVWLTSPNAITQPCIDYKLRKTHQLIHLKQFQIFRHLRIWKCKNLDIALLQRLGINQSNTESSLIFATDAVSNNRIFLLDLTMTTTIDNDDPVQGLINIEDLLCDTENETILLNFTKNNLIQVTRDTIYIDPIGGDKELRKISPGWEFENVTYNDGILIVWNAGLGCVSYIENIDAVDESGALVSNLSSSKGMSKFFKQLGTVTSVNFQIKESTDDPTKYDIWILLPDCVIRTPFSDWISDSLDFSDVYILSVQQALINGPYFCSLDYESYFEVHTLQNNCFKKGSRCTSRVNFQGKDIKFRSFGVNQCLAFSAFEIFVINLTPIHDSRELDFYKLKLPHLGNNNSILEVCPDIENNQLFILYSDGLRILELSYLTSNNGNFLLKSTRSKNKKFLYLDKINRMLVLNQDLREWECIRLSDGKAVGLDSQLLKDDSEEILEIKELPIATEDNPLEKKTVLLISFTSSLKLVLLTAAKNKISNQIIDSYKLDNSRLLNHLVITPRGEIFFLDYKVMGTDNEMSFNKLKVTKHCIDQEERNNTTLRLTLETRFTFKSWSTVKTFTVVGDNIIATTNMGEKLYLIKDFSSSSDESRRVYPLEMYPDSKVQKIIPLNECCFVVAAYCGNRNDLDSRLIFYSLPTIKVGLNNETGSLPDEYGNGRVDDIFEVDFPEGFQFGTMALYDVLHGERHVNRYSEGIRSENDEAEVALRQRRNLLLFWRNHSSTPKPSLRRAATIVYEDHVSSRYFEDISSILGSTAMRTKRLSPYNAVALDKPIQDISYDPAVQTLYVLMADQTIHKFGKDRLPCQDEYEPRWNSGYLVSRRSIVKSDLICEVGLWNLSDNCKNTV</sequence>
<proteinExistence type="evidence at protein level"/>
<name>MMS1_YEAST</name>
<comment type="function">
    <text evidence="1 2 3 4 5 6 7 8 9 11 12">Component of multiple cullin-RING-based E3 ubiquitin-protein ligase complexes (CRLs), which mediate the ubiquitination of target proteins. The CRL associates with CDC34 as the E2 ubiquitin-conjugating enzyme. The functional specificity of the CRL depends on the type of the associated substrate receptor protein. RTT101(MMS1-MMS22) promotes fork progression through damaged DNA or natural pause sites by stabilizing replication proteins like the replication fork-pausing complex (FPC) and leading-strand polymerase at stalled replication forks. RTT101(MMS1-MMS22) ubiquitinates the acetylated histones H3K56ac-H4 at lysine residues H3K121, H3K122 and H3K125. Ubiquitination is required for efficient histone deposition during replication-coupled nucleosome assembly, probably by facilitating the transfer of H3-H4 from ASF1 to other chaperones involved in histone deposition. RTT101(MMS1-CRT10) may regulate nucleotide synthesis through transcriptional regulation of ribonucleotide reductase. RTT101(MMS1) is also involved in the non-functional rRNA decay (NRD) of 25S rRNA through the selective, ubiquitination-dependent degradation of nonfunctional ribosomal particles. Involved in the regulation of TY1 transposition.</text>
</comment>
<comment type="subunit">
    <text evidence="8 10">Component of multiple cullin-RING ligases (CRLs) composed of 4 subunits: the RING protein HRT1, the cullin RTT101, a linker protein MMS1, and one of many alternative substrate receptors belonging to a protein family described as DCAF (DDB1- and CUL4-associated factor). Component of a RTT101(MMS1-MMS22) complex with the substrate receptor MMS22. This complex further interacts with RTT107 and CTF4 to form RTT101-MMS1-MMS22-RTT107 and RTT101-MMS1-MMS22-CTF4 complexes respectively. Component of a RTT101(MSS1-CRT10) complex with the substrate receptor CRT10. Component of a RTT101(MSS1-ESC2) complex with the potential substrate receptor ESC2. Component of a RTT101(MSS1-ORC5) complex with the potential substrate receptor ORC5. Interacts with RTT101 (via N-ter). Interacts (via N-ter) with MMS22 (via C-ter). Interacts with CRT10.</text>
</comment>
<comment type="interaction">
    <interactant intactId="EBI-38894">
        <id>Q06211</id>
    </interactant>
    <interactant intactId="EBI-33799">
        <id>Q06340</id>
        <label>ESC2</label>
    </interactant>
    <organismsDiffer>false</organismsDiffer>
    <experiments>5</experiments>
</comment>
<comment type="interaction">
    <interactant intactId="EBI-38894">
        <id>Q06211</id>
    </interactant>
    <interactant intactId="EBI-31686">
        <id>Q08273</id>
        <label>HRT1</label>
    </interactant>
    <organismsDiffer>false</organismsDiffer>
    <experiments>3</experiments>
</comment>
<comment type="interaction">
    <interactant intactId="EBI-38894">
        <id>Q06211</id>
    </interactant>
    <interactant intactId="EBI-31156">
        <id>Q06164</id>
        <label>MMS22</label>
    </interactant>
    <organismsDiffer>false</organismsDiffer>
    <experiments>9</experiments>
</comment>
<comment type="interaction">
    <interactant intactId="EBI-38894">
        <id>Q06211</id>
    </interactant>
    <interactant intactId="EBI-12584">
        <id>P50874</id>
        <label>ORC5</label>
    </interactant>
    <organismsDiffer>false</organismsDiffer>
    <experiments>4</experiments>
</comment>
<comment type="interaction">
    <interactant intactId="EBI-38894">
        <id>Q06211</id>
    </interactant>
    <interactant intactId="EBI-25861">
        <id>P47050</id>
        <label>RTT101</label>
    </interactant>
    <organismsDiffer>false</organismsDiffer>
    <experiments>13</experiments>
</comment>
<comment type="subcellular location">
    <subcellularLocation>
        <location evidence="11">Nucleus</location>
    </subcellularLocation>
    <text>Enriched on chromatin at sites where replication forks have stalled.</text>
</comment>
<organism>
    <name type="scientific">Saccharomyces cerevisiae (strain ATCC 204508 / S288c)</name>
    <name type="common">Baker's yeast</name>
    <dbReference type="NCBI Taxonomy" id="559292"/>
    <lineage>
        <taxon>Eukaryota</taxon>
        <taxon>Fungi</taxon>
        <taxon>Dikarya</taxon>
        <taxon>Ascomycota</taxon>
        <taxon>Saccharomycotina</taxon>
        <taxon>Saccharomycetes</taxon>
        <taxon>Saccharomycetales</taxon>
        <taxon>Saccharomycetaceae</taxon>
        <taxon>Saccharomyces</taxon>
    </lineage>
</organism>
<dbReference type="EMBL" id="U25840">
    <property type="protein sequence ID" value="AAB68151.1"/>
    <property type="molecule type" value="Genomic_DNA"/>
</dbReference>
<dbReference type="EMBL" id="U14001">
    <property type="protein sequence ID" value="AAG02022.1"/>
    <property type="molecule type" value="Genomic_DNA"/>
</dbReference>
<dbReference type="EMBL" id="BK006949">
    <property type="protein sequence ID" value="DAA11581.1"/>
    <property type="molecule type" value="Genomic_DNA"/>
</dbReference>
<dbReference type="PIR" id="S59823">
    <property type="entry name" value="S59823"/>
</dbReference>
<dbReference type="RefSeq" id="NP_015490.1">
    <property type="nucleotide sequence ID" value="NM_001184261.1"/>
</dbReference>
<dbReference type="SMR" id="Q06211"/>
<dbReference type="BioGRID" id="36337">
    <property type="interactions" value="294"/>
</dbReference>
<dbReference type="ComplexPortal" id="CPX-1157">
    <property type="entry name" value="CUL8-MMS1-MMS22-ESC4 E3 ubiquitin ligase complex"/>
</dbReference>
<dbReference type="ComplexPortal" id="CPX-1165">
    <property type="entry name" value="CUL8-MMS1-MMS22-CTF4 E3 ubiquitin ligase complex"/>
</dbReference>
<dbReference type="ComplexPortal" id="CPX-1166">
    <property type="entry name" value="CUL8-MMS1-ESC2 E3 ubiquitin ligase complex"/>
</dbReference>
<dbReference type="ComplexPortal" id="CPX-1167">
    <property type="entry name" value="CUL8-MMS1-ORC5 E3 ubiquitin ligase complex"/>
</dbReference>
<dbReference type="DIP" id="DIP-6310N"/>
<dbReference type="FunCoup" id="Q06211">
    <property type="interactions" value="188"/>
</dbReference>
<dbReference type="IntAct" id="Q06211">
    <property type="interactions" value="12"/>
</dbReference>
<dbReference type="MINT" id="Q06211"/>
<dbReference type="STRING" id="4932.YPR164W"/>
<dbReference type="iPTMnet" id="Q06211"/>
<dbReference type="PaxDb" id="4932-YPR164W"/>
<dbReference type="PeptideAtlas" id="Q06211"/>
<dbReference type="TopDownProteomics" id="Q06211"/>
<dbReference type="EnsemblFungi" id="YPR164W_mRNA">
    <property type="protein sequence ID" value="YPR164W"/>
    <property type="gene ID" value="YPR164W"/>
</dbReference>
<dbReference type="GeneID" id="856293"/>
<dbReference type="KEGG" id="sce:YPR164W"/>
<dbReference type="AGR" id="SGD:S000006368"/>
<dbReference type="SGD" id="S000006368">
    <property type="gene designation" value="MMS1"/>
</dbReference>
<dbReference type="VEuPathDB" id="FungiDB:YPR164W"/>
<dbReference type="eggNOG" id="ENOG502R4DC">
    <property type="taxonomic scope" value="Eukaryota"/>
</dbReference>
<dbReference type="HOGENOM" id="CLU_004250_0_0_1"/>
<dbReference type="InParanoid" id="Q06211"/>
<dbReference type="OMA" id="DCKTIRH"/>
<dbReference type="OrthoDB" id="4070435at2759"/>
<dbReference type="BioCyc" id="YEAST:G3O-34293-MONOMER"/>
<dbReference type="BioGRID-ORCS" id="856293">
    <property type="hits" value="3 hits in 10 CRISPR screens"/>
</dbReference>
<dbReference type="PRO" id="PR:Q06211"/>
<dbReference type="Proteomes" id="UP000002311">
    <property type="component" value="Chromosome XVI"/>
</dbReference>
<dbReference type="RNAct" id="Q06211">
    <property type="molecule type" value="protein"/>
</dbReference>
<dbReference type="GO" id="GO:0035361">
    <property type="term" value="C:Cul8-RING ubiquitin ligase complex"/>
    <property type="evidence" value="ECO:0000314"/>
    <property type="project" value="SGD"/>
</dbReference>
<dbReference type="GO" id="GO:0005634">
    <property type="term" value="C:nucleus"/>
    <property type="evidence" value="ECO:0007669"/>
    <property type="project" value="UniProtKB-SubCell"/>
</dbReference>
<dbReference type="GO" id="GO:0051301">
    <property type="term" value="P:cell division"/>
    <property type="evidence" value="ECO:0007669"/>
    <property type="project" value="UniProtKB-KW"/>
</dbReference>
<dbReference type="GO" id="GO:0031507">
    <property type="term" value="P:heterochromatin formation"/>
    <property type="evidence" value="ECO:0000303"/>
    <property type="project" value="ComplexPortal"/>
</dbReference>
<dbReference type="GO" id="GO:0070651">
    <property type="term" value="P:nonfunctional rRNA decay"/>
    <property type="evidence" value="ECO:0000315"/>
    <property type="project" value="SGD"/>
</dbReference>
<dbReference type="GO" id="GO:0006334">
    <property type="term" value="P:nucleosome assembly"/>
    <property type="evidence" value="ECO:0000303"/>
    <property type="project" value="ComplexPortal"/>
</dbReference>
<dbReference type="GO" id="GO:0000725">
    <property type="term" value="P:recombinational repair"/>
    <property type="evidence" value="ECO:0000315"/>
    <property type="project" value="SGD"/>
</dbReference>
<dbReference type="GO" id="GO:0006275">
    <property type="term" value="P:regulation of DNA replication"/>
    <property type="evidence" value="ECO:0000303"/>
    <property type="project" value="ComplexPortal"/>
</dbReference>
<dbReference type="GO" id="GO:0031297">
    <property type="term" value="P:replication fork processing"/>
    <property type="evidence" value="ECO:0000315"/>
    <property type="project" value="SGD"/>
</dbReference>
<dbReference type="GO" id="GO:0010526">
    <property type="term" value="P:transposable element silencing"/>
    <property type="evidence" value="ECO:0000315"/>
    <property type="project" value="SGD"/>
</dbReference>